<organism>
    <name type="scientific">Azorhizobium caulinodans (strain ATCC 43989 / DSM 5975 / JCM 20966 / LMG 6465 / NBRC 14845 / NCIMB 13405 / ORS 571)</name>
    <dbReference type="NCBI Taxonomy" id="438753"/>
    <lineage>
        <taxon>Bacteria</taxon>
        <taxon>Pseudomonadati</taxon>
        <taxon>Pseudomonadota</taxon>
        <taxon>Alphaproteobacteria</taxon>
        <taxon>Hyphomicrobiales</taxon>
        <taxon>Xanthobacteraceae</taxon>
        <taxon>Azorhizobium</taxon>
    </lineage>
</organism>
<proteinExistence type="inferred from homology"/>
<protein>
    <recommendedName>
        <fullName evidence="1">3-deoxy-manno-octulosonate cytidylyltransferase</fullName>
        <ecNumber evidence="1">2.7.7.38</ecNumber>
    </recommendedName>
    <alternativeName>
        <fullName evidence="1">CMP-2-keto-3-deoxyoctulosonic acid synthase</fullName>
        <shortName evidence="1">CKS</shortName>
        <shortName evidence="1">CMP-KDO synthase</shortName>
    </alternativeName>
</protein>
<evidence type="ECO:0000255" key="1">
    <source>
        <dbReference type="HAMAP-Rule" id="MF_00057"/>
    </source>
</evidence>
<evidence type="ECO:0000305" key="2"/>
<reference key="1">
    <citation type="submission" date="2007-04" db="EMBL/GenBank/DDBJ databases">
        <title>Complete genome sequence of the nitrogen-fixing bacterium Azorhizobium caulinodans ORS571.</title>
        <authorList>
            <person name="Lee K.B."/>
            <person name="Backer P.D."/>
            <person name="Aono T."/>
            <person name="Liu C.T."/>
            <person name="Suzuki S."/>
            <person name="Suzuki T."/>
            <person name="Kaneko T."/>
            <person name="Yamada M."/>
            <person name="Tabata S."/>
            <person name="Kupfer D.M."/>
            <person name="Najar F.Z."/>
            <person name="Wiley G.B."/>
            <person name="Roe B."/>
            <person name="Binnewies T."/>
            <person name="Ussery D."/>
            <person name="Vereecke D."/>
            <person name="Gevers D."/>
            <person name="Holsters M."/>
            <person name="Oyaizu H."/>
        </authorList>
    </citation>
    <scope>NUCLEOTIDE SEQUENCE [LARGE SCALE GENOMIC DNA]</scope>
    <source>
        <strain>ATCC 43989 / DSM 5975 / JCM 20966 / LMG 6465 / NBRC 14845 / NCIMB 13405 / ORS 571</strain>
    </source>
</reference>
<feature type="chain" id="PRO_0000369997" description="3-deoxy-manno-octulosonate cytidylyltransferase">
    <location>
        <begin position="1"/>
        <end position="250"/>
    </location>
</feature>
<comment type="function">
    <text evidence="1">Activates KDO (a required 8-carbon sugar) for incorporation into bacterial lipopolysaccharide in Gram-negative bacteria.</text>
</comment>
<comment type="catalytic activity">
    <reaction evidence="1">
        <text>3-deoxy-alpha-D-manno-oct-2-ulosonate + CTP = CMP-3-deoxy-beta-D-manno-octulosonate + diphosphate</text>
        <dbReference type="Rhea" id="RHEA:23448"/>
        <dbReference type="ChEBI" id="CHEBI:33019"/>
        <dbReference type="ChEBI" id="CHEBI:37563"/>
        <dbReference type="ChEBI" id="CHEBI:85986"/>
        <dbReference type="ChEBI" id="CHEBI:85987"/>
        <dbReference type="EC" id="2.7.7.38"/>
    </reaction>
</comment>
<comment type="pathway">
    <text evidence="1">Nucleotide-sugar biosynthesis; CMP-3-deoxy-D-manno-octulosonate biosynthesis; CMP-3-deoxy-D-manno-octulosonate from 3-deoxy-D-manno-octulosonate and CTP: step 1/1.</text>
</comment>
<comment type="pathway">
    <text evidence="1">Bacterial outer membrane biogenesis; lipopolysaccharide biosynthesis.</text>
</comment>
<comment type="subcellular location">
    <subcellularLocation>
        <location evidence="1">Cytoplasm</location>
    </subcellularLocation>
</comment>
<comment type="similarity">
    <text evidence="1">Belongs to the KdsB family.</text>
</comment>
<comment type="sequence caution" evidence="2">
    <conflict type="erroneous initiation">
        <sequence resource="EMBL-CDS" id="BAF86135"/>
    </conflict>
</comment>
<gene>
    <name evidence="1" type="primary">kdsB</name>
    <name type="ordered locus">AZC_0137</name>
</gene>
<dbReference type="EC" id="2.7.7.38" evidence="1"/>
<dbReference type="EMBL" id="AP009384">
    <property type="protein sequence ID" value="BAF86135.1"/>
    <property type="status" value="ALT_INIT"/>
    <property type="molecule type" value="Genomic_DNA"/>
</dbReference>
<dbReference type="RefSeq" id="WP_043879874.1">
    <property type="nucleotide sequence ID" value="NC_009937.1"/>
</dbReference>
<dbReference type="SMR" id="A8IGU8"/>
<dbReference type="STRING" id="438753.AZC_0137"/>
<dbReference type="KEGG" id="azc:AZC_0137"/>
<dbReference type="eggNOG" id="COG1212">
    <property type="taxonomic scope" value="Bacteria"/>
</dbReference>
<dbReference type="HOGENOM" id="CLU_065038_0_1_5"/>
<dbReference type="UniPathway" id="UPA00030"/>
<dbReference type="UniPathway" id="UPA00358">
    <property type="reaction ID" value="UER00476"/>
</dbReference>
<dbReference type="Proteomes" id="UP000000270">
    <property type="component" value="Chromosome"/>
</dbReference>
<dbReference type="GO" id="GO:0005829">
    <property type="term" value="C:cytosol"/>
    <property type="evidence" value="ECO:0007669"/>
    <property type="project" value="TreeGrafter"/>
</dbReference>
<dbReference type="GO" id="GO:0008690">
    <property type="term" value="F:3-deoxy-manno-octulosonate cytidylyltransferase activity"/>
    <property type="evidence" value="ECO:0007669"/>
    <property type="project" value="UniProtKB-UniRule"/>
</dbReference>
<dbReference type="GO" id="GO:0033468">
    <property type="term" value="P:CMP-keto-3-deoxy-D-manno-octulosonic acid biosynthetic process"/>
    <property type="evidence" value="ECO:0007669"/>
    <property type="project" value="UniProtKB-UniRule"/>
</dbReference>
<dbReference type="GO" id="GO:0009103">
    <property type="term" value="P:lipopolysaccharide biosynthetic process"/>
    <property type="evidence" value="ECO:0007669"/>
    <property type="project" value="UniProtKB-UniRule"/>
</dbReference>
<dbReference type="CDD" id="cd02517">
    <property type="entry name" value="CMP-KDO-Synthetase"/>
    <property type="match status" value="1"/>
</dbReference>
<dbReference type="Gene3D" id="3.90.550.10">
    <property type="entry name" value="Spore Coat Polysaccharide Biosynthesis Protein SpsA, Chain A"/>
    <property type="match status" value="1"/>
</dbReference>
<dbReference type="HAMAP" id="MF_00057">
    <property type="entry name" value="KdsB"/>
    <property type="match status" value="1"/>
</dbReference>
<dbReference type="InterPro" id="IPR003329">
    <property type="entry name" value="Cytidylyl_trans"/>
</dbReference>
<dbReference type="InterPro" id="IPR004528">
    <property type="entry name" value="KdsB"/>
</dbReference>
<dbReference type="InterPro" id="IPR029044">
    <property type="entry name" value="Nucleotide-diphossugar_trans"/>
</dbReference>
<dbReference type="NCBIfam" id="TIGR00466">
    <property type="entry name" value="kdsB"/>
    <property type="match status" value="1"/>
</dbReference>
<dbReference type="NCBIfam" id="NF003948">
    <property type="entry name" value="PRK05450.1-1"/>
    <property type="match status" value="1"/>
</dbReference>
<dbReference type="NCBIfam" id="NF003952">
    <property type="entry name" value="PRK05450.1-5"/>
    <property type="match status" value="1"/>
</dbReference>
<dbReference type="PANTHER" id="PTHR42866">
    <property type="entry name" value="3-DEOXY-MANNO-OCTULOSONATE CYTIDYLYLTRANSFERASE"/>
    <property type="match status" value="1"/>
</dbReference>
<dbReference type="PANTHER" id="PTHR42866:SF2">
    <property type="entry name" value="3-DEOXY-MANNO-OCTULOSONATE CYTIDYLYLTRANSFERASE, MITOCHONDRIAL"/>
    <property type="match status" value="1"/>
</dbReference>
<dbReference type="Pfam" id="PF02348">
    <property type="entry name" value="CTP_transf_3"/>
    <property type="match status" value="1"/>
</dbReference>
<dbReference type="SUPFAM" id="SSF53448">
    <property type="entry name" value="Nucleotide-diphospho-sugar transferases"/>
    <property type="match status" value="1"/>
</dbReference>
<name>KDSB_AZOC5</name>
<sequence length="250" mass="26436">MAFSASDVLVLIPARLAASRLPGKPLADVGGRPMIVEVARRAVAAGIGRVAVATDAVEIADAVRAAGFEAVMTRADHPSGSDRIFEALGVLDPDGAVQVVVNVQGDLPTIAPETIRAALVPLEEGPADIATLTAVITEEGERTDPNVVKVVGTPIGENRLRALYFTRATAPTGEGPLYHHIGLYAYRRAALERFVSLPPSPLEKRERLEQLRALEAGMRIDVAVVDAVPLGVDTPEHLERARALLASNDN</sequence>
<keyword id="KW-0963">Cytoplasm</keyword>
<keyword id="KW-0448">Lipopolysaccharide biosynthesis</keyword>
<keyword id="KW-0548">Nucleotidyltransferase</keyword>
<keyword id="KW-1185">Reference proteome</keyword>
<keyword id="KW-0808">Transferase</keyword>
<accession>A8IGU8</accession>